<comment type="function">
    <text evidence="5 6 7 8 9 11 12 13">Transcriptional activator that binds to the SBP-box DNA core binding motif 5'-GTAC-3' (PubMed:24170127). Can target the TCP motif 5'-TGGGCC/T-3' through interaction with PCF1 and PCF2 (PubMed:24170127). Key regulator of the plant architecture that controls shoot branching and panicle development (PubMed:20495564, PubMed:20495565, PubMed:22960246). Promotes panicle branching (PubMed:20495564, PubMed:20495565, PubMed:22960246, PubMed:26519999). Promotes high grain yield (PubMed:20495564, PubMed:20495565, PubMed:26519999). Binds to the promoters of TB1 and DEP1 (PubMed:24170127). Suppresses rice tillering mainly through positive regulation of TB1 (PubMed:24170127). Regulates plant height and panicle length through positive regulation of DEP1 (PubMed:24170127). Repressed by D53 in strigolactone (SL) signaling (PubMed:28809396). Acts with D53 to mediate the SL-regulated tiller development (PubMed:28809396). Functions as a direct downstream component of D53 in regulating tiller number and SL-induced gene expression (PubMed:28809396). Binds directly to the D53 promoter and plays a critical role in the negative feedback regulation of SL-induced D53 expression (PubMed:28809396). Involved in defense response against pathogens (PubMed:30190406, PubMed:30886331). Phosphorylated at Ser-163 in response to infection by the fungal pathogen Magnaporthe oryzae (PubMed:30190406). Phosphorylation reduces SPL14/IPA1 binding to the GTAC site in the DEP1 promoter and enhances binding to the TGGGCC site in the WRKY45 promoter (PubMed:30190406). Binding to the promoter of the pathogen defense gene WRKY45 activates its expression, leading to enhanced disease resistance (PubMed:30190406). Reduces gibberellin-mediated disease susceptibility by stabilizing SLR1 (PubMed:30886331). Possesses transactivation activity in yeast cells (PubMed:20495564).</text>
</comment>
<comment type="subunit">
    <text evidence="8 10 11 13 14">Interacts with PCF1 and PCF2 (PubMed:24170127). Interacts with IPI1 (PubMed:28298520). Interacts with D53 (PubMed:28809396). Interacts with SLR1 (PubMed:30886331). Interacts (via C-terminus) with SHI1 (PubMed:30914468).</text>
</comment>
<comment type="subcellular location">
    <subcellularLocation>
        <location evidence="5 6 8 10">Nucleus</location>
    </subcellularLocation>
</comment>
<comment type="tissue specificity">
    <text evidence="4 5 6 7">Expressed in young panicles (PubMed:16861571). Expressed in the shoot apex at both the vegetative and reproductive stages (PubMed:20495564, PubMed:20495565, PubMed:22960246). Highly expressed in the promordia of primary and secondary branches (PubMed:20495565, PubMed:22960246). Highly expressed in young panicles (PubMed:20495564).</text>
</comment>
<comment type="induction">
    <text evidence="4 5 6 7">Negatively regulated by microRNA miR156.</text>
</comment>
<comment type="domain">
    <text evidence="19">The SBP-type zinc finger is required for the binding to DNA.</text>
</comment>
<comment type="PTM">
    <text evidence="12">Phosphorylated at Ser-163 in response to infection by the fungal pathogen Magnaporthe oryzae.</text>
</comment>
<comment type="PTM">
    <text evidence="10">Ubiquitinated by IPI1, which leads to proteasomal degradation.</text>
</comment>
<comment type="miscellaneous">
    <text evidence="13">Plants overexpressing SPL14/IPA1 exhibit enhanced disease resistance against the bacterial pathogen Xanthomonas oryzae pv oryzae (Xoo), and increased grain yield.</text>
</comment>
<evidence type="ECO:0000255" key="1"/>
<evidence type="ECO:0000255" key="2">
    <source>
        <dbReference type="PROSITE-ProRule" id="PRU00470"/>
    </source>
</evidence>
<evidence type="ECO:0000256" key="3">
    <source>
        <dbReference type="SAM" id="MobiDB-lite"/>
    </source>
</evidence>
<evidence type="ECO:0000269" key="4">
    <source>
    </source>
</evidence>
<evidence type="ECO:0000269" key="5">
    <source>
    </source>
</evidence>
<evidence type="ECO:0000269" key="6">
    <source>
    </source>
</evidence>
<evidence type="ECO:0000269" key="7">
    <source>
    </source>
</evidence>
<evidence type="ECO:0000269" key="8">
    <source>
    </source>
</evidence>
<evidence type="ECO:0000269" key="9">
    <source>
    </source>
</evidence>
<evidence type="ECO:0000269" key="10">
    <source>
    </source>
</evidence>
<evidence type="ECO:0000269" key="11">
    <source>
    </source>
</evidence>
<evidence type="ECO:0000269" key="12">
    <source>
    </source>
</evidence>
<evidence type="ECO:0000269" key="13">
    <source>
    </source>
</evidence>
<evidence type="ECO:0000269" key="14">
    <source>
    </source>
</evidence>
<evidence type="ECO:0000303" key="15">
    <source>
    </source>
</evidence>
<evidence type="ECO:0000303" key="16">
    <source>
    </source>
</evidence>
<evidence type="ECO:0000303" key="17">
    <source>
    </source>
</evidence>
<evidence type="ECO:0000305" key="18"/>
<evidence type="ECO:0000305" key="19">
    <source>
    </source>
</evidence>
<evidence type="ECO:0000312" key="20">
    <source>
        <dbReference type="EMBL" id="BAD10674.1"/>
    </source>
</evidence>
<evidence type="ECO:0000312" key="21">
    <source>
        <dbReference type="EMBL" id="BAD10733.1"/>
    </source>
</evidence>
<evidence type="ECO:0000312" key="22">
    <source>
        <dbReference type="EMBL" id="BAT06187.1"/>
    </source>
</evidence>
<organism>
    <name type="scientific">Oryza sativa subsp. japonica</name>
    <name type="common">Rice</name>
    <dbReference type="NCBI Taxonomy" id="39947"/>
    <lineage>
        <taxon>Eukaryota</taxon>
        <taxon>Viridiplantae</taxon>
        <taxon>Streptophyta</taxon>
        <taxon>Embryophyta</taxon>
        <taxon>Tracheophyta</taxon>
        <taxon>Spermatophyta</taxon>
        <taxon>Magnoliopsida</taxon>
        <taxon>Liliopsida</taxon>
        <taxon>Poales</taxon>
        <taxon>Poaceae</taxon>
        <taxon>BOP clade</taxon>
        <taxon>Oryzoideae</taxon>
        <taxon>Oryzeae</taxon>
        <taxon>Oryzinae</taxon>
        <taxon>Oryza</taxon>
        <taxon>Oryza sativa</taxon>
    </lineage>
</organism>
<dbReference type="EMBL" id="GU136674">
    <property type="protein sequence ID" value="ADJ19220.1"/>
    <property type="molecule type" value="Genomic_DNA"/>
</dbReference>
<dbReference type="EMBL" id="AP005816">
    <property type="protein sequence ID" value="BAD10674.1"/>
    <property type="molecule type" value="Genomic_DNA"/>
</dbReference>
<dbReference type="EMBL" id="AP006049">
    <property type="protein sequence ID" value="BAD10733.1"/>
    <property type="molecule type" value="Genomic_DNA"/>
</dbReference>
<dbReference type="EMBL" id="AP008214">
    <property type="protein sequence ID" value="BAF24118.1"/>
    <property type="molecule type" value="Genomic_DNA"/>
</dbReference>
<dbReference type="EMBL" id="AP014964">
    <property type="protein sequence ID" value="BAT06187.1"/>
    <property type="molecule type" value="Genomic_DNA"/>
</dbReference>
<dbReference type="EMBL" id="AK107191">
    <property type="protein sequence ID" value="BAG97990.1"/>
    <property type="molecule type" value="mRNA"/>
</dbReference>
<dbReference type="SMR" id="Q7EXZ2"/>
<dbReference type="FunCoup" id="Q7EXZ2">
    <property type="interactions" value="950"/>
</dbReference>
<dbReference type="STRING" id="39947.Q7EXZ2"/>
<dbReference type="iPTMnet" id="Q7EXZ2"/>
<dbReference type="PaxDb" id="39947-Q7EXZ2"/>
<dbReference type="EnsemblPlants" id="Os08t0509600-01">
    <property type="protein sequence ID" value="Os08t0509600-01"/>
    <property type="gene ID" value="Os08g0509600"/>
</dbReference>
<dbReference type="Gramene" id="Os08t0509600-01">
    <property type="protein sequence ID" value="Os08t0509600-01"/>
    <property type="gene ID" value="Os08g0509600"/>
</dbReference>
<dbReference type="KEGG" id="dosa:Os08g0509600"/>
<dbReference type="eggNOG" id="ENOG502QPVZ">
    <property type="taxonomic scope" value="Eukaryota"/>
</dbReference>
<dbReference type="HOGENOM" id="CLU_057950_0_0_1"/>
<dbReference type="InParanoid" id="Q7EXZ2"/>
<dbReference type="OMA" id="PWDTTTH"/>
<dbReference type="PlantReactome" id="R-OSA-9030908">
    <property type="pathway name" value="Underwater shoot and internode elongation"/>
</dbReference>
<dbReference type="PlantReactome" id="R-OSA-9035605">
    <property type="pathway name" value="Regulation of seed size"/>
</dbReference>
<dbReference type="PlantReactome" id="R-OSA-9608575">
    <property type="pathway name" value="Reproductive meristem phase change"/>
</dbReference>
<dbReference type="Proteomes" id="UP000000763">
    <property type="component" value="Chromosome 8"/>
</dbReference>
<dbReference type="Proteomes" id="UP000059680">
    <property type="component" value="Chromosome 8"/>
</dbReference>
<dbReference type="GO" id="GO:0005634">
    <property type="term" value="C:nucleus"/>
    <property type="evidence" value="ECO:0000314"/>
    <property type="project" value="UniProtKB"/>
</dbReference>
<dbReference type="GO" id="GO:0001216">
    <property type="term" value="F:DNA-binding transcription activator activity"/>
    <property type="evidence" value="ECO:0000314"/>
    <property type="project" value="UniProtKB"/>
</dbReference>
<dbReference type="GO" id="GO:0043565">
    <property type="term" value="F:sequence-specific DNA binding"/>
    <property type="evidence" value="ECO:0000314"/>
    <property type="project" value="UniProtKB"/>
</dbReference>
<dbReference type="GO" id="GO:0008270">
    <property type="term" value="F:zinc ion binding"/>
    <property type="evidence" value="ECO:0007669"/>
    <property type="project" value="UniProtKB-KW"/>
</dbReference>
<dbReference type="GO" id="GO:1900426">
    <property type="term" value="P:positive regulation of defense response to bacterium"/>
    <property type="evidence" value="ECO:0000315"/>
    <property type="project" value="UniProtKB"/>
</dbReference>
<dbReference type="GO" id="GO:0045893">
    <property type="term" value="P:positive regulation of DNA-templated transcription"/>
    <property type="evidence" value="ECO:0000314"/>
    <property type="project" value="UniProtKB"/>
</dbReference>
<dbReference type="GO" id="GO:2000032">
    <property type="term" value="P:regulation of secondary shoot formation"/>
    <property type="evidence" value="ECO:0000314"/>
    <property type="project" value="UniProtKB"/>
</dbReference>
<dbReference type="FunFam" id="4.10.1100.10:FF:000001">
    <property type="entry name" value="Squamosa promoter-binding-like protein 14"/>
    <property type="match status" value="1"/>
</dbReference>
<dbReference type="Gene3D" id="4.10.1100.10">
    <property type="entry name" value="Transcription factor, SBP-box domain"/>
    <property type="match status" value="1"/>
</dbReference>
<dbReference type="InterPro" id="IPR044817">
    <property type="entry name" value="SBP-like"/>
</dbReference>
<dbReference type="InterPro" id="IPR004333">
    <property type="entry name" value="SBP_dom"/>
</dbReference>
<dbReference type="InterPro" id="IPR036893">
    <property type="entry name" value="SBP_sf"/>
</dbReference>
<dbReference type="PANTHER" id="PTHR31251">
    <property type="entry name" value="SQUAMOSA PROMOTER-BINDING-LIKE PROTEIN 4"/>
    <property type="match status" value="1"/>
</dbReference>
<dbReference type="PANTHER" id="PTHR31251:SF226">
    <property type="entry name" value="SQUAMOSA PROMOTER-BINDING-LIKE PROTEIN 6"/>
    <property type="match status" value="1"/>
</dbReference>
<dbReference type="Pfam" id="PF03110">
    <property type="entry name" value="SBP"/>
    <property type="match status" value="1"/>
</dbReference>
<dbReference type="SUPFAM" id="SSF103612">
    <property type="entry name" value="SBT domain"/>
    <property type="match status" value="1"/>
</dbReference>
<dbReference type="PROSITE" id="PS51141">
    <property type="entry name" value="ZF_SBP"/>
    <property type="match status" value="1"/>
</dbReference>
<protein>
    <recommendedName>
        <fullName evidence="15">Squamosa promoter-binding-like protein 14</fullName>
        <shortName evidence="15">OsSPL14</shortName>
    </recommendedName>
    <alternativeName>
        <fullName evidence="17">Protein IDEAL PLANT ARCHITECTURE 1</fullName>
    </alternativeName>
    <alternativeName>
        <fullName evidence="16">Protein WEALTHY FARMER'S PANICLE</fullName>
    </alternativeName>
</protein>
<sequence>MEMASGGGAAAAAGGGVGGSGGGGGGGDEHRQLHGLKFGKKIYFEDAAAAAGGGGTGSGSGSASAAPPSSSSKAAGGGRGGGGKNKGKGVAAAAPPPPPPPPRCQVEGCGADLSGIKNYYCRHKVCFMHSKAPRVVVAGLEQRFCQQCSRFHLLPEFDQGKRSCRRRLAGHNERRRRPQTPLASRYGRLAASVGEHRRFRSFTLDFSYPRVPSSVRNAWPAIQPGDRISGGIQWHRNVAPHGHSSAVAGYGANTYSGQGSSSSGPPVFAGPNLPPGGCLAGVGAATDSSCALSLLSTQPWDTTTHSAAASHNQAAAMSTTTSFDGNPVAPSAMAGSYMAPSPWTGSRGHEGGGRSVAHQLPHEVSLDEVHPGPSHHAHFSGELELALQGNGPAPAPRIDPGSGSTFDQTSNTMDWSL</sequence>
<accession>Q7EXZ2</accession>
<accession>B7F043</accession>
<accession>D8WJ58</accession>
<name>SPL14_ORYSJ</name>
<proteinExistence type="evidence at protein level"/>
<reference key="1">
    <citation type="journal article" date="2010" name="Nat. Genet.">
        <title>Regulation of OsSPL14 by OsmiR156 defines ideal plant architecture in rice.</title>
        <authorList>
            <person name="Jiao Y."/>
            <person name="Wang Y."/>
            <person name="Xue D."/>
            <person name="Wang J."/>
            <person name="Yan M."/>
            <person name="Liu G."/>
            <person name="Dong G."/>
            <person name="Zeng D."/>
            <person name="Lu Z."/>
            <person name="Zhu X."/>
            <person name="Qian Q."/>
            <person name="Li J."/>
        </authorList>
    </citation>
    <scope>NUCLEOTIDE SEQUENCE [GENOMIC DNA]</scope>
    <scope>FUNCTION</scope>
    <scope>SUBCELLULAR LOCATION</scope>
    <scope>TISSUE SPECIFICITY</scope>
    <scope>INDUCTION</scope>
    <scope>VARIANT ILE-292</scope>
</reference>
<reference key="2">
    <citation type="journal article" date="2005" name="Nature">
        <title>The map-based sequence of the rice genome.</title>
        <authorList>
            <consortium name="International rice genome sequencing project (IRGSP)"/>
        </authorList>
    </citation>
    <scope>NUCLEOTIDE SEQUENCE [LARGE SCALE GENOMIC DNA]</scope>
    <source>
        <strain>cv. Nipponbare</strain>
    </source>
</reference>
<reference key="3">
    <citation type="journal article" date="2008" name="Nucleic Acids Res.">
        <title>The rice annotation project database (RAP-DB): 2008 update.</title>
        <authorList>
            <consortium name="The rice annotation project (RAP)"/>
        </authorList>
    </citation>
    <scope>GENOME REANNOTATION</scope>
    <source>
        <strain>cv. Nipponbare</strain>
    </source>
</reference>
<reference key="4">
    <citation type="journal article" date="2013" name="Rice">
        <title>Improvement of the Oryza sativa Nipponbare reference genome using next generation sequence and optical map data.</title>
        <authorList>
            <person name="Kawahara Y."/>
            <person name="de la Bastide M."/>
            <person name="Hamilton J.P."/>
            <person name="Kanamori H."/>
            <person name="McCombie W.R."/>
            <person name="Ouyang S."/>
            <person name="Schwartz D.C."/>
            <person name="Tanaka T."/>
            <person name="Wu J."/>
            <person name="Zhou S."/>
            <person name="Childs K.L."/>
            <person name="Davidson R.M."/>
            <person name="Lin H."/>
            <person name="Quesada-Ocampo L."/>
            <person name="Vaillancourt B."/>
            <person name="Sakai H."/>
            <person name="Lee S.S."/>
            <person name="Kim J."/>
            <person name="Numa H."/>
            <person name="Itoh T."/>
            <person name="Buell C.R."/>
            <person name="Matsumoto T."/>
        </authorList>
    </citation>
    <scope>GENOME REANNOTATION</scope>
    <source>
        <strain>cv. Nipponbare</strain>
    </source>
</reference>
<reference key="5">
    <citation type="journal article" date="2003" name="Science">
        <title>Collection, mapping, and annotation of over 28,000 cDNA clones from japonica rice.</title>
        <authorList>
            <consortium name="The rice full-length cDNA consortium"/>
        </authorList>
    </citation>
    <scope>NUCLEOTIDE SEQUENCE [LARGE SCALE MRNA]</scope>
    <source>
        <strain>cv. Nipponbare</strain>
    </source>
</reference>
<reference key="6">
    <citation type="journal article" date="2006" name="Plant Physiol.">
        <title>Genomic organization, differential expression, and interaction of SQUAMOSA promoter-binding-like transcription factors and microRNA156 in rice.</title>
        <authorList>
            <person name="Xie K."/>
            <person name="Wu C."/>
            <person name="Xiong L."/>
        </authorList>
    </citation>
    <scope>TISSUE SPECIFICITY</scope>
    <scope>INDUCTION</scope>
    <scope>GENE FAMILY</scope>
    <scope>NOMENCLATURE</scope>
</reference>
<reference key="7">
    <citation type="journal article" date="2008" name="Gene">
        <title>Comparative study of SBP-box gene family in Arabidopsis and rice.</title>
        <authorList>
            <person name="Yang Z."/>
            <person name="Wang X."/>
            <person name="Gu S."/>
            <person name="Hu Z."/>
            <person name="Xu H."/>
            <person name="Xu C."/>
        </authorList>
    </citation>
    <scope>GENE FAMILY</scope>
</reference>
<reference key="8">
    <citation type="journal article" date="2010" name="Nat. Genet.">
        <title>OsSPL14 promotes panicle branching and higher grain productivity in rice.</title>
        <authorList>
            <person name="Miura K."/>
            <person name="Ikeda M."/>
            <person name="Matsubara A."/>
            <person name="Song X.J."/>
            <person name="Ito M."/>
            <person name="Asano K."/>
            <person name="Matsuoka M."/>
            <person name="Kitano H."/>
            <person name="Ashikari M."/>
        </authorList>
    </citation>
    <scope>FUNCTION</scope>
    <scope>TISSUE SPECIFICITY</scope>
    <scope>INDUCTION</scope>
</reference>
<reference key="9">
    <citation type="journal article" date="2012" name="Plant Cell Physiol.">
        <title>Control of tiller growth of rice by OsSPL14 and strigolactones, which work in two independent pathways.</title>
        <authorList>
            <person name="Luo L."/>
            <person name="Li W."/>
            <person name="Miura K."/>
            <person name="Ashikari M."/>
            <person name="Kyozuka J."/>
        </authorList>
    </citation>
    <scope>FUNCTION</scope>
    <scope>TISSUE SPECIFICITY</scope>
    <scope>INDUCTION</scope>
</reference>
<reference key="10">
    <citation type="journal article" date="2013" name="Plant Cell">
        <title>Genome-wide binding analysis of the transcription activator ideal plant architecture1 reveals a complex network regulating rice plant architecture.</title>
        <authorList>
            <person name="Lu Z."/>
            <person name="Yu H."/>
            <person name="Xiong G."/>
            <person name="Wang J."/>
            <person name="Jiao Y."/>
            <person name="Liu G."/>
            <person name="Jing Y."/>
            <person name="Meng X."/>
            <person name="Hu X."/>
            <person name="Qian Q."/>
            <person name="Fu X."/>
            <person name="Wang Y."/>
            <person name="Li J."/>
        </authorList>
    </citation>
    <scope>FUNCTION</scope>
    <scope>INTERACTION WITH PCF1 AND PCF2</scope>
    <scope>SUBCELLULAR LOCATION</scope>
</reference>
<reference key="11">
    <citation type="journal article" date="2016" name="Gene">
        <title>Enhanced expression of OsSPL14 gene and its association with yield components in rice (Oryza sativa) under low nitrogen conditions.</title>
        <authorList>
            <person name="Srikanth B."/>
            <person name="Subhakara Rao I."/>
            <person name="Surekha K."/>
            <person name="Subrahmanyam D."/>
            <person name="Voleti S.R."/>
            <person name="Neeraja C.N."/>
        </authorList>
    </citation>
    <scope>FUNCTION</scope>
</reference>
<reference key="12">
    <citation type="journal article" date="2017" name="Cell Res.">
        <title>IPA1 functions as a downstream transcription factor repressed by D53 in strigolactone signaling in rice.</title>
        <authorList>
            <person name="Song X."/>
            <person name="Lu Z."/>
            <person name="Yu H."/>
            <person name="Shao G."/>
            <person name="Xiong J."/>
            <person name="Meng X."/>
            <person name="Jing Y."/>
            <person name="Liu G."/>
            <person name="Xiong G."/>
            <person name="Duan J."/>
            <person name="Yao X.F."/>
            <person name="Liu C.M."/>
            <person name="Li H."/>
            <person name="Wang Y."/>
            <person name="Li J."/>
        </authorList>
    </citation>
    <scope>FUNCTION</scope>
    <scope>INTERACTION WITH D53</scope>
</reference>
<reference key="13">
    <citation type="journal article" date="2017" name="Plant Cell">
        <title>Tissue-specific ubiquitination by IPA1 INTERACTING PROTEIN1 modulates IPA1 protein levels to regulate plant architecture in rice.</title>
        <authorList>
            <person name="Wang J."/>
            <person name="Yu H."/>
            <person name="Xiong G."/>
            <person name="Lu Z."/>
            <person name="Jiao Y."/>
            <person name="Meng X."/>
            <person name="Liu G."/>
            <person name="Chen X."/>
            <person name="Wang Y."/>
            <person name="Li J."/>
        </authorList>
    </citation>
    <scope>INTERACTION WITH IPI1</scope>
    <scope>SUBCELLULAR LOCATION</scope>
    <scope>UBIQUITINATION BY IPI1</scope>
</reference>
<reference key="14">
    <citation type="journal article" date="2018" name="Science">
        <title>A single transcription factor promotes both yield and immunity in rice.</title>
        <authorList>
            <person name="Wang J."/>
            <person name="Zhou L."/>
            <person name="Shi H."/>
            <person name="Chern M."/>
            <person name="Yu H."/>
            <person name="Yi H."/>
            <person name="He M."/>
            <person name="Yin J."/>
            <person name="Zhu X."/>
            <person name="Li Y."/>
            <person name="Li W."/>
            <person name="Liu J."/>
            <person name="Wang J."/>
            <person name="Chen X."/>
            <person name="Qing H."/>
            <person name="Wang Y."/>
            <person name="Liu G."/>
            <person name="Wang W."/>
            <person name="Li P."/>
            <person name="Wu X."/>
            <person name="Zhu L."/>
            <person name="Zhou J.M."/>
            <person name="Ronald P.C."/>
            <person name="Li S."/>
            <person name="Li J."/>
            <person name="Chen X."/>
        </authorList>
    </citation>
    <scope>FUNCTION</scope>
    <scope>PHOSPHORYLATION AT SER-163</scope>
    <scope>MUTAGENESIS OF SER-163</scope>
</reference>
<reference key="15">
    <citation type="journal article" date="2019" name="Nat. Plants">
        <title>Inducible overexpression of Ideal Plant Architecture1 improves both yield and disease resistance in rice.</title>
        <authorList>
            <person name="Liu M."/>
            <person name="Shi Z."/>
            <person name="Zhang X."/>
            <person name="Wang M."/>
            <person name="Zhang L."/>
            <person name="Zheng K."/>
            <person name="Liu J."/>
            <person name="Hu X."/>
            <person name="Di C."/>
            <person name="Qian Q."/>
            <person name="He Z."/>
            <person name="Yang D.L."/>
        </authorList>
    </citation>
    <scope>FUNCTION</scope>
    <scope>INTERACTION WITH SLR1</scope>
</reference>
<reference key="16">
    <citation type="journal article" date="2019" name="Plant Cell">
        <title>OsSHI1 regulates plant architecture through modulating the transcriptional activity of IPA1 in rice.</title>
        <authorList>
            <person name="Duan E."/>
            <person name="Wang Y."/>
            <person name="Li X."/>
            <person name="Lin Q."/>
            <person name="Zhang T."/>
            <person name="Wang Y."/>
            <person name="Zhou C."/>
            <person name="Zhang H."/>
            <person name="Jiang L."/>
            <person name="Wang J."/>
            <person name="Lei C."/>
            <person name="Zhang X."/>
            <person name="Guo X."/>
            <person name="Wang H."/>
            <person name="Wan J."/>
        </authorList>
    </citation>
    <scope>INTERACTION WITH SHI1</scope>
</reference>
<gene>
    <name evidence="15" type="primary">SPL14</name>
    <name evidence="17" type="synonym">IPA1</name>
    <name evidence="16" type="synonym">WFP</name>
    <name evidence="22" type="ordered locus">Os08g0509600</name>
    <name evidence="18" type="ordered locus">LOC_Os08g39890</name>
    <name evidence="20" type="ORF">B1168A08.33</name>
    <name evidence="21" type="ORF">OSJNBa0016N23.108</name>
</gene>
<feature type="chain" id="PRO_0000308241" description="Squamosa promoter-binding-like protein 14">
    <location>
        <begin position="1"/>
        <end position="417"/>
    </location>
</feature>
<feature type="zinc finger region" description="SBP-type" evidence="2">
    <location>
        <begin position="101"/>
        <end position="178"/>
    </location>
</feature>
<feature type="region of interest" description="Disordered" evidence="3">
    <location>
        <begin position="1"/>
        <end position="32"/>
    </location>
</feature>
<feature type="region of interest" description="Disordered" evidence="3">
    <location>
        <begin position="51"/>
        <end position="102"/>
    </location>
</feature>
<feature type="region of interest" description="Disordered" evidence="3">
    <location>
        <begin position="387"/>
        <end position="417"/>
    </location>
</feature>
<feature type="short sequence motif" description="Bipartite nuclear localization signal" evidence="1">
    <location>
        <begin position="161"/>
        <end position="177"/>
    </location>
</feature>
<feature type="compositionally biased region" description="Gly residues" evidence="3">
    <location>
        <begin position="1"/>
        <end position="26"/>
    </location>
</feature>
<feature type="compositionally biased region" description="Gly residues" evidence="3">
    <location>
        <begin position="51"/>
        <end position="60"/>
    </location>
</feature>
<feature type="compositionally biased region" description="Low complexity" evidence="3">
    <location>
        <begin position="61"/>
        <end position="74"/>
    </location>
</feature>
<feature type="compositionally biased region" description="Gly residues" evidence="3">
    <location>
        <begin position="75"/>
        <end position="84"/>
    </location>
</feature>
<feature type="compositionally biased region" description="Polar residues" evidence="3">
    <location>
        <begin position="402"/>
        <end position="417"/>
    </location>
</feature>
<feature type="binding site" evidence="2">
    <location>
        <position position="104"/>
    </location>
    <ligand>
        <name>Zn(2+)</name>
        <dbReference type="ChEBI" id="CHEBI:29105"/>
        <label>1</label>
    </ligand>
</feature>
<feature type="binding site" evidence="2">
    <location>
        <position position="109"/>
    </location>
    <ligand>
        <name>Zn(2+)</name>
        <dbReference type="ChEBI" id="CHEBI:29105"/>
        <label>1</label>
    </ligand>
</feature>
<feature type="binding site" evidence="2">
    <location>
        <position position="126"/>
    </location>
    <ligand>
        <name>Zn(2+)</name>
        <dbReference type="ChEBI" id="CHEBI:29105"/>
        <label>1</label>
    </ligand>
</feature>
<feature type="binding site" evidence="2">
    <location>
        <position position="129"/>
    </location>
    <ligand>
        <name>Zn(2+)</name>
        <dbReference type="ChEBI" id="CHEBI:29105"/>
        <label>1</label>
    </ligand>
</feature>
<feature type="binding site" evidence="2">
    <location>
        <position position="145"/>
    </location>
    <ligand>
        <name>Zn(2+)</name>
        <dbReference type="ChEBI" id="CHEBI:29105"/>
        <label>2</label>
    </ligand>
</feature>
<feature type="binding site" evidence="2">
    <location>
        <position position="148"/>
    </location>
    <ligand>
        <name>Zn(2+)</name>
        <dbReference type="ChEBI" id="CHEBI:29105"/>
        <label>2</label>
    </ligand>
</feature>
<feature type="binding site" evidence="2">
    <location>
        <position position="152"/>
    </location>
    <ligand>
        <name>Zn(2+)</name>
        <dbReference type="ChEBI" id="CHEBI:29105"/>
        <label>2</label>
    </ligand>
</feature>
<feature type="binding site" evidence="2">
    <location>
        <position position="164"/>
    </location>
    <ligand>
        <name>Zn(2+)</name>
        <dbReference type="ChEBI" id="CHEBI:29105"/>
        <label>2</label>
    </ligand>
</feature>
<feature type="modified residue" description="Phosphoserine" evidence="12">
    <location>
        <position position="163"/>
    </location>
</feature>
<feature type="sequence variant" description="In strain: cv. Shaoniejing; induces an ideal plant phenotype with a reduced tiller number, increased lodging resistance and enhanced grain yield." evidence="6">
    <original>L</original>
    <variation>I</variation>
    <location>
        <position position="292"/>
    </location>
</feature>
<feature type="mutagenesis site" description="Mimics constitutive phosphorylation; reduces binding to the GTAC site in the DEP1 promoter and enhances binding to the TGGGCC site in the WRKY45 promoter." evidence="12">
    <original>S</original>
    <variation>D</variation>
    <location>
        <position position="163"/>
    </location>
</feature>
<keyword id="KW-0238">DNA-binding</keyword>
<keyword id="KW-0479">Metal-binding</keyword>
<keyword id="KW-0539">Nucleus</keyword>
<keyword id="KW-0597">Phosphoprotein</keyword>
<keyword id="KW-1185">Reference proteome</keyword>
<keyword id="KW-0804">Transcription</keyword>
<keyword id="KW-0805">Transcription regulation</keyword>
<keyword id="KW-0832">Ubl conjugation</keyword>
<keyword id="KW-0862">Zinc</keyword>
<keyword id="KW-0863">Zinc-finger</keyword>